<gene>
    <name evidence="1" type="primary">nrdR</name>
    <name type="ordered locus">SYNPCC7002_A0956</name>
</gene>
<evidence type="ECO:0000255" key="1">
    <source>
        <dbReference type="HAMAP-Rule" id="MF_00440"/>
    </source>
</evidence>
<protein>
    <recommendedName>
        <fullName evidence="1">Transcriptional repressor NrdR</fullName>
    </recommendedName>
</protein>
<comment type="function">
    <text evidence="1">Negatively regulates transcription of bacterial ribonucleotide reductase nrd genes and operons by binding to NrdR-boxes.</text>
</comment>
<comment type="cofactor">
    <cofactor evidence="1">
        <name>Zn(2+)</name>
        <dbReference type="ChEBI" id="CHEBI:29105"/>
    </cofactor>
    <text evidence="1">Binds 1 zinc ion.</text>
</comment>
<comment type="similarity">
    <text evidence="1">Belongs to the NrdR family.</text>
</comment>
<reference key="1">
    <citation type="submission" date="2008-02" db="EMBL/GenBank/DDBJ databases">
        <title>Complete sequence of Synechococcus sp. PCC 7002.</title>
        <authorList>
            <person name="Li T."/>
            <person name="Zhao J."/>
            <person name="Zhao C."/>
            <person name="Liu Z."/>
            <person name="Zhao F."/>
            <person name="Marquardt J."/>
            <person name="Nomura C.T."/>
            <person name="Persson S."/>
            <person name="Detter J.C."/>
            <person name="Richardson P.M."/>
            <person name="Lanz C."/>
            <person name="Schuster S.C."/>
            <person name="Wang J."/>
            <person name="Li S."/>
            <person name="Huang X."/>
            <person name="Cai T."/>
            <person name="Yu Z."/>
            <person name="Luo J."/>
            <person name="Zhao J."/>
            <person name="Bryant D.A."/>
        </authorList>
    </citation>
    <scope>NUCLEOTIDE SEQUENCE [LARGE SCALE GENOMIC DNA]</scope>
    <source>
        <strain>ATCC 27264 / PCC 7002 / PR-6</strain>
    </source>
</reference>
<name>NRDR_PICP2</name>
<dbReference type="EMBL" id="CP000951">
    <property type="protein sequence ID" value="ACA98959.1"/>
    <property type="molecule type" value="Genomic_DNA"/>
</dbReference>
<dbReference type="RefSeq" id="WP_012306583.1">
    <property type="nucleotide sequence ID" value="NZ_JAHHPU010000001.1"/>
</dbReference>
<dbReference type="SMR" id="B1XJ17"/>
<dbReference type="STRING" id="32049.SYNPCC7002_A0956"/>
<dbReference type="KEGG" id="syp:SYNPCC7002_A0956"/>
<dbReference type="eggNOG" id="COG1327">
    <property type="taxonomic scope" value="Bacteria"/>
</dbReference>
<dbReference type="HOGENOM" id="CLU_108412_0_0_3"/>
<dbReference type="Proteomes" id="UP000001688">
    <property type="component" value="Chromosome"/>
</dbReference>
<dbReference type="GO" id="GO:0005524">
    <property type="term" value="F:ATP binding"/>
    <property type="evidence" value="ECO:0007669"/>
    <property type="project" value="UniProtKB-KW"/>
</dbReference>
<dbReference type="GO" id="GO:0003677">
    <property type="term" value="F:DNA binding"/>
    <property type="evidence" value="ECO:0007669"/>
    <property type="project" value="UniProtKB-KW"/>
</dbReference>
<dbReference type="GO" id="GO:0008270">
    <property type="term" value="F:zinc ion binding"/>
    <property type="evidence" value="ECO:0007669"/>
    <property type="project" value="UniProtKB-UniRule"/>
</dbReference>
<dbReference type="GO" id="GO:0045892">
    <property type="term" value="P:negative regulation of DNA-templated transcription"/>
    <property type="evidence" value="ECO:0007669"/>
    <property type="project" value="UniProtKB-UniRule"/>
</dbReference>
<dbReference type="HAMAP" id="MF_00440">
    <property type="entry name" value="NrdR"/>
    <property type="match status" value="1"/>
</dbReference>
<dbReference type="InterPro" id="IPR005144">
    <property type="entry name" value="ATP-cone_dom"/>
</dbReference>
<dbReference type="InterPro" id="IPR055173">
    <property type="entry name" value="NrdR-like_N"/>
</dbReference>
<dbReference type="InterPro" id="IPR003796">
    <property type="entry name" value="RNR_NrdR-like"/>
</dbReference>
<dbReference type="NCBIfam" id="TIGR00244">
    <property type="entry name" value="transcriptional regulator NrdR"/>
    <property type="match status" value="1"/>
</dbReference>
<dbReference type="PANTHER" id="PTHR30455">
    <property type="entry name" value="TRANSCRIPTIONAL REPRESSOR NRDR"/>
    <property type="match status" value="1"/>
</dbReference>
<dbReference type="PANTHER" id="PTHR30455:SF2">
    <property type="entry name" value="TRANSCRIPTIONAL REPRESSOR NRDR"/>
    <property type="match status" value="1"/>
</dbReference>
<dbReference type="Pfam" id="PF03477">
    <property type="entry name" value="ATP-cone"/>
    <property type="match status" value="1"/>
</dbReference>
<dbReference type="Pfam" id="PF22811">
    <property type="entry name" value="Zn_ribbon_NrdR"/>
    <property type="match status" value="1"/>
</dbReference>
<dbReference type="PROSITE" id="PS51161">
    <property type="entry name" value="ATP_CONE"/>
    <property type="match status" value="1"/>
</dbReference>
<sequence>MQCPYCQHTDSRVLESRSTGAGRSIRRRRECLSCKHRFTTYERIEFVPISVIKRNGQSEAFDRSKILRGMVRACEKTTVLPSTLEAIAEEIEAQLQQKPKRSITTAQIGDLVLHRLRQESEVAYVRFASVYRQFQGVDDFIETLSHLQDNAEQANLWIQTLNEDEESEDLTSPSVLTPSAN</sequence>
<feature type="chain" id="PRO_1000191825" description="Transcriptional repressor NrdR">
    <location>
        <begin position="1"/>
        <end position="181"/>
    </location>
</feature>
<feature type="domain" description="ATP-cone" evidence="1">
    <location>
        <begin position="49"/>
        <end position="139"/>
    </location>
</feature>
<feature type="zinc finger region" evidence="1">
    <location>
        <begin position="3"/>
        <end position="34"/>
    </location>
</feature>
<keyword id="KW-0067">ATP-binding</keyword>
<keyword id="KW-0238">DNA-binding</keyword>
<keyword id="KW-0479">Metal-binding</keyword>
<keyword id="KW-0547">Nucleotide-binding</keyword>
<keyword id="KW-1185">Reference proteome</keyword>
<keyword id="KW-0678">Repressor</keyword>
<keyword id="KW-0804">Transcription</keyword>
<keyword id="KW-0805">Transcription regulation</keyword>
<keyword id="KW-0862">Zinc</keyword>
<keyword id="KW-0863">Zinc-finger</keyword>
<accession>B1XJ17</accession>
<proteinExistence type="inferred from homology"/>
<organism>
    <name type="scientific">Picosynechococcus sp. (strain ATCC 27264 / PCC 7002 / PR-6)</name>
    <name type="common">Agmenellum quadruplicatum</name>
    <dbReference type="NCBI Taxonomy" id="32049"/>
    <lineage>
        <taxon>Bacteria</taxon>
        <taxon>Bacillati</taxon>
        <taxon>Cyanobacteriota</taxon>
        <taxon>Cyanophyceae</taxon>
        <taxon>Oscillatoriophycideae</taxon>
        <taxon>Chroococcales</taxon>
        <taxon>Geminocystaceae</taxon>
        <taxon>Picosynechococcus</taxon>
    </lineage>
</organism>